<name>VF301_ASFP4</name>
<organism>
    <name type="scientific">African swine fever virus (isolate Tick/South Africa/Pretoriuskop Pr4/1996)</name>
    <name type="common">ASFV</name>
    <dbReference type="NCBI Taxonomy" id="561443"/>
    <lineage>
        <taxon>Viruses</taxon>
        <taxon>Varidnaviria</taxon>
        <taxon>Bamfordvirae</taxon>
        <taxon>Nucleocytoviricota</taxon>
        <taxon>Pokkesviricetes</taxon>
        <taxon>Asfuvirales</taxon>
        <taxon>Asfarviridae</taxon>
        <taxon>Asfivirus</taxon>
        <taxon>African swine fever virus</taxon>
    </lineage>
</organism>
<organismHost>
    <name type="scientific">Ornithodoros</name>
    <name type="common">relapsing fever ticks</name>
    <dbReference type="NCBI Taxonomy" id="6937"/>
</organismHost>
<organismHost>
    <name type="scientific">Phacochoerus aethiopicus</name>
    <name type="common">Warthog</name>
    <dbReference type="NCBI Taxonomy" id="85517"/>
</organismHost>
<organismHost>
    <name type="scientific">Phacochoerus africanus</name>
    <name type="common">Warthog</name>
    <dbReference type="NCBI Taxonomy" id="41426"/>
</organismHost>
<organismHost>
    <name type="scientific">Potamochoerus larvatus</name>
    <name type="common">Bushpig</name>
    <dbReference type="NCBI Taxonomy" id="273792"/>
</organismHost>
<organismHost>
    <name type="scientific">Sus scrofa</name>
    <name type="common">Pig</name>
    <dbReference type="NCBI Taxonomy" id="9823"/>
</organismHost>
<gene>
    <name type="ordered locus">Pret-140</name>
</gene>
<dbReference type="EMBL" id="AY261363">
    <property type="status" value="NOT_ANNOTATED_CDS"/>
    <property type="molecule type" value="Genomic_DNA"/>
</dbReference>
<dbReference type="SMR" id="P0CAC9"/>
<dbReference type="Proteomes" id="UP000000859">
    <property type="component" value="Segment"/>
</dbReference>
<dbReference type="GO" id="GO:0039548">
    <property type="term" value="P:symbiont-mediated suppression of host cytoplasmic pattern recognition receptor signaling pathway via inhibition of IRF3 activity"/>
    <property type="evidence" value="ECO:0007669"/>
    <property type="project" value="UniProtKB-KW"/>
</dbReference>
<dbReference type="Gene3D" id="3.70.10.10">
    <property type="match status" value="1"/>
</dbReference>
<dbReference type="InterPro" id="IPR046938">
    <property type="entry name" value="DNA_clamp_sf"/>
</dbReference>
<dbReference type="SUPFAM" id="SSF55979">
    <property type="entry name" value="DNA clamp"/>
    <property type="match status" value="1"/>
</dbReference>
<protein>
    <recommendedName>
        <fullName>Uncharacterized protein E301R</fullName>
    </recommendedName>
</protein>
<accession>P0CAC9</accession>
<feature type="chain" id="PRO_0000373632" description="Uncharacterized protein E301R">
    <location>
        <begin position="1"/>
        <end position="301"/>
    </location>
</feature>
<proteinExistence type="inferred from homology"/>
<evidence type="ECO:0000250" key="1">
    <source>
        <dbReference type="UniProtKB" id="Q65196"/>
    </source>
</evidence>
<evidence type="ECO:0000305" key="2"/>
<keyword id="KW-0945">Host-virus interaction</keyword>
<keyword id="KW-1090">Inhibition of host innate immune response by virus</keyword>
<keyword id="KW-1092">Inhibition of host IRF3 by virus</keyword>
<keyword id="KW-1113">Inhibition of host RLR pathway by virus</keyword>
<keyword id="KW-0426">Late protein</keyword>
<keyword id="KW-0899">Viral immunoevasion</keyword>
<reference key="1">
    <citation type="submission" date="2003-03" db="EMBL/GenBank/DDBJ databases">
        <title>African swine fever virus genomes.</title>
        <authorList>
            <person name="Kutish G.F."/>
            <person name="Rock D.L."/>
        </authorList>
    </citation>
    <scope>NUCLEOTIDE SEQUENCE [GENOMIC DNA]</scope>
</reference>
<sequence length="301" mass="35293">MSEDIRRGPGRPPKKRVVPNFERKGILEKPVRPQSRLEFSYDNPLIFKNLFIYFKNLKSKNILVRCTPTEITFFSRDQSQASFVIATIDGKNVNHYYASDVFWLGINRELVEKMFNSIDRSFLKITIVHRYDKPETLFFIFTDFDIDKECTYHITVSEPELDMDLIEMEKSISEERLKNYPLRWEFTSKQLKKTFSDLSNYTELVTIEKLGGDTPLHLYFQKFNSISYHEMYKSSNKINLTSTIPKSQVFQINVKIAHIKSLASAMVTDKIRILCEENGNLIFQSEMDALMLNTITLNNMI</sequence>
<comment type="function">
    <text evidence="1">Plays a role in the inhibition of host innate immune system by acting as a negatively regulator of type I interferon production. Mechanistically, interacts with and prevents host IRF3 nuclear localization to inhibit its transcriptional activity.</text>
</comment>
<comment type="subunit">
    <text evidence="1">Interacts with host IRF3.</text>
</comment>
<comment type="induction">
    <text evidence="2">Expressed in the late phase of the viral replicative cycle.</text>
</comment>
<comment type="similarity">
    <text evidence="2">Belongs to the asfivirus E301R family.</text>
</comment>